<name>BIOB_NOVAD</name>
<dbReference type="EC" id="2.8.1.6" evidence="1"/>
<dbReference type="EMBL" id="CP000248">
    <property type="protein sequence ID" value="ABD25166.1"/>
    <property type="molecule type" value="Genomic_DNA"/>
</dbReference>
<dbReference type="RefSeq" id="WP_011444380.1">
    <property type="nucleotide sequence ID" value="NC_007794.1"/>
</dbReference>
<dbReference type="SMR" id="Q2GAF7"/>
<dbReference type="STRING" id="279238.Saro_0719"/>
<dbReference type="KEGG" id="nar:Saro_0719"/>
<dbReference type="eggNOG" id="COG0502">
    <property type="taxonomic scope" value="Bacteria"/>
</dbReference>
<dbReference type="HOGENOM" id="CLU_033172_1_2_5"/>
<dbReference type="UniPathway" id="UPA00078">
    <property type="reaction ID" value="UER00162"/>
</dbReference>
<dbReference type="Proteomes" id="UP000009134">
    <property type="component" value="Chromosome"/>
</dbReference>
<dbReference type="GO" id="GO:0051537">
    <property type="term" value="F:2 iron, 2 sulfur cluster binding"/>
    <property type="evidence" value="ECO:0007669"/>
    <property type="project" value="UniProtKB-KW"/>
</dbReference>
<dbReference type="GO" id="GO:0051539">
    <property type="term" value="F:4 iron, 4 sulfur cluster binding"/>
    <property type="evidence" value="ECO:0007669"/>
    <property type="project" value="UniProtKB-KW"/>
</dbReference>
<dbReference type="GO" id="GO:0004076">
    <property type="term" value="F:biotin synthase activity"/>
    <property type="evidence" value="ECO:0007669"/>
    <property type="project" value="UniProtKB-UniRule"/>
</dbReference>
<dbReference type="GO" id="GO:0005506">
    <property type="term" value="F:iron ion binding"/>
    <property type="evidence" value="ECO:0007669"/>
    <property type="project" value="UniProtKB-UniRule"/>
</dbReference>
<dbReference type="GO" id="GO:0009102">
    <property type="term" value="P:biotin biosynthetic process"/>
    <property type="evidence" value="ECO:0007669"/>
    <property type="project" value="UniProtKB-UniRule"/>
</dbReference>
<dbReference type="CDD" id="cd01335">
    <property type="entry name" value="Radical_SAM"/>
    <property type="match status" value="1"/>
</dbReference>
<dbReference type="FunFam" id="3.20.20.70:FF:000011">
    <property type="entry name" value="Biotin synthase"/>
    <property type="match status" value="1"/>
</dbReference>
<dbReference type="Gene3D" id="3.20.20.70">
    <property type="entry name" value="Aldolase class I"/>
    <property type="match status" value="1"/>
</dbReference>
<dbReference type="HAMAP" id="MF_01694">
    <property type="entry name" value="BioB"/>
    <property type="match status" value="1"/>
</dbReference>
<dbReference type="InterPro" id="IPR013785">
    <property type="entry name" value="Aldolase_TIM"/>
</dbReference>
<dbReference type="InterPro" id="IPR010722">
    <property type="entry name" value="BATS_dom"/>
</dbReference>
<dbReference type="InterPro" id="IPR002684">
    <property type="entry name" value="Biotin_synth/BioAB"/>
</dbReference>
<dbReference type="InterPro" id="IPR024177">
    <property type="entry name" value="Biotin_synthase"/>
</dbReference>
<dbReference type="InterPro" id="IPR006638">
    <property type="entry name" value="Elp3/MiaA/NifB-like_rSAM"/>
</dbReference>
<dbReference type="InterPro" id="IPR007197">
    <property type="entry name" value="rSAM"/>
</dbReference>
<dbReference type="NCBIfam" id="TIGR00433">
    <property type="entry name" value="bioB"/>
    <property type="match status" value="1"/>
</dbReference>
<dbReference type="PANTHER" id="PTHR22976">
    <property type="entry name" value="BIOTIN SYNTHASE"/>
    <property type="match status" value="1"/>
</dbReference>
<dbReference type="PANTHER" id="PTHR22976:SF2">
    <property type="entry name" value="BIOTIN SYNTHASE, MITOCHONDRIAL"/>
    <property type="match status" value="1"/>
</dbReference>
<dbReference type="Pfam" id="PF06968">
    <property type="entry name" value="BATS"/>
    <property type="match status" value="1"/>
</dbReference>
<dbReference type="Pfam" id="PF04055">
    <property type="entry name" value="Radical_SAM"/>
    <property type="match status" value="1"/>
</dbReference>
<dbReference type="PIRSF" id="PIRSF001619">
    <property type="entry name" value="Biotin_synth"/>
    <property type="match status" value="1"/>
</dbReference>
<dbReference type="SFLD" id="SFLDF00272">
    <property type="entry name" value="biotin_synthase"/>
    <property type="match status" value="1"/>
</dbReference>
<dbReference type="SFLD" id="SFLDG01278">
    <property type="entry name" value="biotin_synthase_like"/>
    <property type="match status" value="1"/>
</dbReference>
<dbReference type="SMART" id="SM00876">
    <property type="entry name" value="BATS"/>
    <property type="match status" value="1"/>
</dbReference>
<dbReference type="SMART" id="SM00729">
    <property type="entry name" value="Elp3"/>
    <property type="match status" value="1"/>
</dbReference>
<dbReference type="SUPFAM" id="SSF102114">
    <property type="entry name" value="Radical SAM enzymes"/>
    <property type="match status" value="1"/>
</dbReference>
<dbReference type="PROSITE" id="PS51918">
    <property type="entry name" value="RADICAL_SAM"/>
    <property type="match status" value="1"/>
</dbReference>
<keyword id="KW-0001">2Fe-2S</keyword>
<keyword id="KW-0004">4Fe-4S</keyword>
<keyword id="KW-0093">Biotin biosynthesis</keyword>
<keyword id="KW-0408">Iron</keyword>
<keyword id="KW-0411">Iron-sulfur</keyword>
<keyword id="KW-0479">Metal-binding</keyword>
<keyword id="KW-1185">Reference proteome</keyword>
<keyword id="KW-0949">S-adenosyl-L-methionine</keyword>
<keyword id="KW-0808">Transferase</keyword>
<sequence length="356" mass="38170">MQETALLERESAGTGNAPVRTDWTREEIAALFDLPFTELLFRAAEVHRAHHRAGEVQLCTLLSIKTGGCPEDCGYCSQSVKADSGVEATKLMEVQKVLQSAAQAKDNGSKRFCMGAAWRNPKDRDMPAIISMIKGVREMGMETCMTLGMLTPSQAAQLADAGLDYYNHNIDTSPERYEEVITTRTFADRLQTLDNVRNAGINVCSGGIVGMGETRADRVGFVHALATLEQHPESVPVNALVPIKGTVLGDMLADTPLAKIDDIEFVRTVAVARITMPLSMVRLSAGRESMSEATQALCFMAGANSIFTGDKLLTAANAGDDADAAMFKRLGLKPMEGEEPMRAMKSVGGCSGGCAA</sequence>
<reference key="1">
    <citation type="submission" date="2006-01" db="EMBL/GenBank/DDBJ databases">
        <title>Complete sequence of Novosphingobium aromaticivorans DSM 12444.</title>
        <authorList>
            <consortium name="US DOE Joint Genome Institute"/>
            <person name="Copeland A."/>
            <person name="Lucas S."/>
            <person name="Lapidus A."/>
            <person name="Barry K."/>
            <person name="Detter J.C."/>
            <person name="Glavina T."/>
            <person name="Hammon N."/>
            <person name="Israni S."/>
            <person name="Pitluck S."/>
            <person name="Chain P."/>
            <person name="Malfatti S."/>
            <person name="Shin M."/>
            <person name="Vergez L."/>
            <person name="Schmutz J."/>
            <person name="Larimer F."/>
            <person name="Land M."/>
            <person name="Kyrpides N."/>
            <person name="Ivanova N."/>
            <person name="Fredrickson J."/>
            <person name="Balkwill D."/>
            <person name="Romine M.F."/>
            <person name="Richardson P."/>
        </authorList>
    </citation>
    <scope>NUCLEOTIDE SEQUENCE [LARGE SCALE GENOMIC DNA]</scope>
    <source>
        <strain>ATCC 700278 / DSM 12444 / CCUG 56034 / CIP 105152 / NBRC 16084 / F199</strain>
    </source>
</reference>
<protein>
    <recommendedName>
        <fullName evidence="1">Biotin synthase</fullName>
        <ecNumber evidence="1">2.8.1.6</ecNumber>
    </recommendedName>
</protein>
<gene>
    <name evidence="1" type="primary">bioB</name>
    <name type="ordered locus">Saro_0719</name>
</gene>
<feature type="chain" id="PRO_0000381511" description="Biotin synthase">
    <location>
        <begin position="1"/>
        <end position="356"/>
    </location>
</feature>
<feature type="domain" description="Radical SAM core" evidence="2">
    <location>
        <begin position="54"/>
        <end position="278"/>
    </location>
</feature>
<feature type="binding site" evidence="1">
    <location>
        <position position="69"/>
    </location>
    <ligand>
        <name>[4Fe-4S] cluster</name>
        <dbReference type="ChEBI" id="CHEBI:49883"/>
        <note>4Fe-4S-S-AdoMet</note>
    </ligand>
</feature>
<feature type="binding site" evidence="1">
    <location>
        <position position="73"/>
    </location>
    <ligand>
        <name>[4Fe-4S] cluster</name>
        <dbReference type="ChEBI" id="CHEBI:49883"/>
        <note>4Fe-4S-S-AdoMet</note>
    </ligand>
</feature>
<feature type="binding site" evidence="1">
    <location>
        <position position="76"/>
    </location>
    <ligand>
        <name>[4Fe-4S] cluster</name>
        <dbReference type="ChEBI" id="CHEBI:49883"/>
        <note>4Fe-4S-S-AdoMet</note>
    </ligand>
</feature>
<feature type="binding site" evidence="1">
    <location>
        <position position="113"/>
    </location>
    <ligand>
        <name>[2Fe-2S] cluster</name>
        <dbReference type="ChEBI" id="CHEBI:190135"/>
    </ligand>
</feature>
<feature type="binding site" evidence="1">
    <location>
        <position position="144"/>
    </location>
    <ligand>
        <name>[2Fe-2S] cluster</name>
        <dbReference type="ChEBI" id="CHEBI:190135"/>
    </ligand>
</feature>
<feature type="binding site" evidence="1">
    <location>
        <position position="204"/>
    </location>
    <ligand>
        <name>[2Fe-2S] cluster</name>
        <dbReference type="ChEBI" id="CHEBI:190135"/>
    </ligand>
</feature>
<feature type="binding site" evidence="1">
    <location>
        <position position="282"/>
    </location>
    <ligand>
        <name>[2Fe-2S] cluster</name>
        <dbReference type="ChEBI" id="CHEBI:190135"/>
    </ligand>
</feature>
<proteinExistence type="inferred from homology"/>
<evidence type="ECO:0000255" key="1">
    <source>
        <dbReference type="HAMAP-Rule" id="MF_01694"/>
    </source>
</evidence>
<evidence type="ECO:0000255" key="2">
    <source>
        <dbReference type="PROSITE-ProRule" id="PRU01266"/>
    </source>
</evidence>
<comment type="function">
    <text evidence="1">Catalyzes the conversion of dethiobiotin (DTB) to biotin by the insertion of a sulfur atom into dethiobiotin via a radical-based mechanism.</text>
</comment>
<comment type="catalytic activity">
    <reaction evidence="1">
        <text>(4R,5S)-dethiobiotin + (sulfur carrier)-SH + 2 reduced [2Fe-2S]-[ferredoxin] + 2 S-adenosyl-L-methionine = (sulfur carrier)-H + biotin + 2 5'-deoxyadenosine + 2 L-methionine + 2 oxidized [2Fe-2S]-[ferredoxin]</text>
        <dbReference type="Rhea" id="RHEA:22060"/>
        <dbReference type="Rhea" id="RHEA-COMP:10000"/>
        <dbReference type="Rhea" id="RHEA-COMP:10001"/>
        <dbReference type="Rhea" id="RHEA-COMP:14737"/>
        <dbReference type="Rhea" id="RHEA-COMP:14739"/>
        <dbReference type="ChEBI" id="CHEBI:17319"/>
        <dbReference type="ChEBI" id="CHEBI:29917"/>
        <dbReference type="ChEBI" id="CHEBI:33737"/>
        <dbReference type="ChEBI" id="CHEBI:33738"/>
        <dbReference type="ChEBI" id="CHEBI:57586"/>
        <dbReference type="ChEBI" id="CHEBI:57844"/>
        <dbReference type="ChEBI" id="CHEBI:59789"/>
        <dbReference type="ChEBI" id="CHEBI:64428"/>
        <dbReference type="ChEBI" id="CHEBI:149473"/>
        <dbReference type="EC" id="2.8.1.6"/>
    </reaction>
</comment>
<comment type="cofactor">
    <cofactor evidence="1">
        <name>[4Fe-4S] cluster</name>
        <dbReference type="ChEBI" id="CHEBI:49883"/>
    </cofactor>
    <text evidence="1">Binds 1 [4Fe-4S] cluster. The cluster is coordinated with 3 cysteines and an exchangeable S-adenosyl-L-methionine.</text>
</comment>
<comment type="cofactor">
    <cofactor evidence="1">
        <name>[2Fe-2S] cluster</name>
        <dbReference type="ChEBI" id="CHEBI:190135"/>
    </cofactor>
    <text evidence="1">Binds 1 [2Fe-2S] cluster. The cluster is coordinated with 3 cysteines and 1 arginine.</text>
</comment>
<comment type="pathway">
    <text evidence="1">Cofactor biosynthesis; biotin biosynthesis; biotin from 7,8-diaminononanoate: step 2/2.</text>
</comment>
<comment type="subunit">
    <text evidence="1">Homodimer.</text>
</comment>
<comment type="similarity">
    <text evidence="1">Belongs to the radical SAM superfamily. Biotin synthase family.</text>
</comment>
<organism>
    <name type="scientific">Novosphingobium aromaticivorans (strain ATCC 700278 / DSM 12444 / CCUG 56034 / CIP 105152 / NBRC 16084 / F199)</name>
    <dbReference type="NCBI Taxonomy" id="279238"/>
    <lineage>
        <taxon>Bacteria</taxon>
        <taxon>Pseudomonadati</taxon>
        <taxon>Pseudomonadota</taxon>
        <taxon>Alphaproteobacteria</taxon>
        <taxon>Sphingomonadales</taxon>
        <taxon>Sphingomonadaceae</taxon>
        <taxon>Novosphingobium</taxon>
    </lineage>
</organism>
<accession>Q2GAF7</accession>